<reference key="1">
    <citation type="submission" date="2007-10" db="EMBL/GenBank/DDBJ databases">
        <title>Brucella canis ATCC 23365 whole genome shotgun sequencing project.</title>
        <authorList>
            <person name="Setubal J.C."/>
            <person name="Bowns C."/>
            <person name="Boyle S."/>
            <person name="Crasta O.R."/>
            <person name="Czar M.J."/>
            <person name="Dharmanolla C."/>
            <person name="Gillespie J.J."/>
            <person name="Kenyon R.W."/>
            <person name="Lu J."/>
            <person name="Mane S."/>
            <person name="Mohapatra S."/>
            <person name="Nagrani S."/>
            <person name="Purkayastha A."/>
            <person name="Rajasimha H.K."/>
            <person name="Shallom J.M."/>
            <person name="Shallom S."/>
            <person name="Shukla M."/>
            <person name="Snyder E.E."/>
            <person name="Sobral B.W."/>
            <person name="Wattam A.R."/>
            <person name="Will R."/>
            <person name="Williams K."/>
            <person name="Yoo H."/>
            <person name="Bruce D."/>
            <person name="Detter C."/>
            <person name="Munk C."/>
            <person name="Brettin T.S."/>
        </authorList>
    </citation>
    <scope>NUCLEOTIDE SEQUENCE [LARGE SCALE GENOMIC DNA]</scope>
    <source>
        <strain>ATCC 23365 / NCTC 10854 / RM-666</strain>
    </source>
</reference>
<protein>
    <recommendedName>
        <fullName evidence="2">Elongation factor Tu</fullName>
        <shortName evidence="2">EF-Tu</shortName>
        <ecNumber evidence="2">3.6.5.3</ecNumber>
    </recommendedName>
</protein>
<keyword id="KW-0963">Cytoplasm</keyword>
<keyword id="KW-0251">Elongation factor</keyword>
<keyword id="KW-0342">GTP-binding</keyword>
<keyword id="KW-0378">Hydrolase</keyword>
<keyword id="KW-0460">Magnesium</keyword>
<keyword id="KW-0479">Metal-binding</keyword>
<keyword id="KW-0547">Nucleotide-binding</keyword>
<keyword id="KW-0648">Protein biosynthesis</keyword>
<keyword id="KW-1185">Reference proteome</keyword>
<evidence type="ECO:0000250" key="1"/>
<evidence type="ECO:0000255" key="2">
    <source>
        <dbReference type="HAMAP-Rule" id="MF_00118"/>
    </source>
</evidence>
<dbReference type="EC" id="3.6.5.3" evidence="2"/>
<dbReference type="EMBL" id="CP000872">
    <property type="protein sequence ID" value="ABX62307.1"/>
    <property type="molecule type" value="Genomic_DNA"/>
</dbReference>
<dbReference type="EMBL" id="CP000872">
    <property type="protein sequence ID" value="ABX62322.1"/>
    <property type="molecule type" value="Genomic_DNA"/>
</dbReference>
<dbReference type="SMR" id="A9M5Q2"/>
<dbReference type="KEGG" id="bcs:BCAN_A1258"/>
<dbReference type="KEGG" id="bcs:BCAN_A1274"/>
<dbReference type="HOGENOM" id="CLU_007265_0_0_5"/>
<dbReference type="PhylomeDB" id="A9M5Q2"/>
<dbReference type="Proteomes" id="UP000001385">
    <property type="component" value="Chromosome I"/>
</dbReference>
<dbReference type="GO" id="GO:0005829">
    <property type="term" value="C:cytosol"/>
    <property type="evidence" value="ECO:0007669"/>
    <property type="project" value="TreeGrafter"/>
</dbReference>
<dbReference type="GO" id="GO:0005525">
    <property type="term" value="F:GTP binding"/>
    <property type="evidence" value="ECO:0007669"/>
    <property type="project" value="UniProtKB-UniRule"/>
</dbReference>
<dbReference type="GO" id="GO:0003924">
    <property type="term" value="F:GTPase activity"/>
    <property type="evidence" value="ECO:0007669"/>
    <property type="project" value="InterPro"/>
</dbReference>
<dbReference type="GO" id="GO:0097216">
    <property type="term" value="F:guanosine tetraphosphate binding"/>
    <property type="evidence" value="ECO:0007669"/>
    <property type="project" value="UniProtKB-ARBA"/>
</dbReference>
<dbReference type="GO" id="GO:0003746">
    <property type="term" value="F:translation elongation factor activity"/>
    <property type="evidence" value="ECO:0007669"/>
    <property type="project" value="UniProtKB-UniRule"/>
</dbReference>
<dbReference type="CDD" id="cd01884">
    <property type="entry name" value="EF_Tu"/>
    <property type="match status" value="1"/>
</dbReference>
<dbReference type="CDD" id="cd03697">
    <property type="entry name" value="EFTU_II"/>
    <property type="match status" value="1"/>
</dbReference>
<dbReference type="CDD" id="cd03707">
    <property type="entry name" value="EFTU_III"/>
    <property type="match status" value="1"/>
</dbReference>
<dbReference type="FunFam" id="2.40.30.10:FF:000001">
    <property type="entry name" value="Elongation factor Tu"/>
    <property type="match status" value="1"/>
</dbReference>
<dbReference type="FunFam" id="3.40.50.300:FF:000003">
    <property type="entry name" value="Elongation factor Tu"/>
    <property type="match status" value="1"/>
</dbReference>
<dbReference type="Gene3D" id="3.40.50.300">
    <property type="entry name" value="P-loop containing nucleotide triphosphate hydrolases"/>
    <property type="match status" value="1"/>
</dbReference>
<dbReference type="Gene3D" id="2.40.30.10">
    <property type="entry name" value="Translation factors"/>
    <property type="match status" value="2"/>
</dbReference>
<dbReference type="HAMAP" id="MF_00118_B">
    <property type="entry name" value="EF_Tu_B"/>
    <property type="match status" value="1"/>
</dbReference>
<dbReference type="InterPro" id="IPR041709">
    <property type="entry name" value="EF-Tu_GTP-bd"/>
</dbReference>
<dbReference type="InterPro" id="IPR050055">
    <property type="entry name" value="EF-Tu_GTPase"/>
</dbReference>
<dbReference type="InterPro" id="IPR004161">
    <property type="entry name" value="EFTu-like_2"/>
</dbReference>
<dbReference type="InterPro" id="IPR033720">
    <property type="entry name" value="EFTU_2"/>
</dbReference>
<dbReference type="InterPro" id="IPR031157">
    <property type="entry name" value="G_TR_CS"/>
</dbReference>
<dbReference type="InterPro" id="IPR027417">
    <property type="entry name" value="P-loop_NTPase"/>
</dbReference>
<dbReference type="InterPro" id="IPR005225">
    <property type="entry name" value="Small_GTP-bd"/>
</dbReference>
<dbReference type="InterPro" id="IPR000795">
    <property type="entry name" value="T_Tr_GTP-bd_dom"/>
</dbReference>
<dbReference type="InterPro" id="IPR009000">
    <property type="entry name" value="Transl_B-barrel_sf"/>
</dbReference>
<dbReference type="InterPro" id="IPR009001">
    <property type="entry name" value="Transl_elong_EF1A/Init_IF2_C"/>
</dbReference>
<dbReference type="InterPro" id="IPR004541">
    <property type="entry name" value="Transl_elong_EFTu/EF1A_bac/org"/>
</dbReference>
<dbReference type="InterPro" id="IPR004160">
    <property type="entry name" value="Transl_elong_EFTu/EF1A_C"/>
</dbReference>
<dbReference type="NCBIfam" id="TIGR00485">
    <property type="entry name" value="EF-Tu"/>
    <property type="match status" value="1"/>
</dbReference>
<dbReference type="NCBIfam" id="NF000766">
    <property type="entry name" value="PRK00049.1"/>
    <property type="match status" value="1"/>
</dbReference>
<dbReference type="NCBIfam" id="NF009372">
    <property type="entry name" value="PRK12735.1"/>
    <property type="match status" value="1"/>
</dbReference>
<dbReference type="NCBIfam" id="NF009373">
    <property type="entry name" value="PRK12736.1"/>
    <property type="match status" value="1"/>
</dbReference>
<dbReference type="NCBIfam" id="TIGR00231">
    <property type="entry name" value="small_GTP"/>
    <property type="match status" value="1"/>
</dbReference>
<dbReference type="PANTHER" id="PTHR43721:SF22">
    <property type="entry name" value="ELONGATION FACTOR TU, MITOCHONDRIAL"/>
    <property type="match status" value="1"/>
</dbReference>
<dbReference type="PANTHER" id="PTHR43721">
    <property type="entry name" value="ELONGATION FACTOR TU-RELATED"/>
    <property type="match status" value="1"/>
</dbReference>
<dbReference type="Pfam" id="PF00009">
    <property type="entry name" value="GTP_EFTU"/>
    <property type="match status" value="1"/>
</dbReference>
<dbReference type="Pfam" id="PF03144">
    <property type="entry name" value="GTP_EFTU_D2"/>
    <property type="match status" value="1"/>
</dbReference>
<dbReference type="Pfam" id="PF03143">
    <property type="entry name" value="GTP_EFTU_D3"/>
    <property type="match status" value="1"/>
</dbReference>
<dbReference type="PRINTS" id="PR00315">
    <property type="entry name" value="ELONGATNFCT"/>
</dbReference>
<dbReference type="SUPFAM" id="SSF50465">
    <property type="entry name" value="EF-Tu/eEF-1alpha/eIF2-gamma C-terminal domain"/>
    <property type="match status" value="1"/>
</dbReference>
<dbReference type="SUPFAM" id="SSF52540">
    <property type="entry name" value="P-loop containing nucleoside triphosphate hydrolases"/>
    <property type="match status" value="1"/>
</dbReference>
<dbReference type="SUPFAM" id="SSF50447">
    <property type="entry name" value="Translation proteins"/>
    <property type="match status" value="1"/>
</dbReference>
<dbReference type="PROSITE" id="PS00301">
    <property type="entry name" value="G_TR_1"/>
    <property type="match status" value="1"/>
</dbReference>
<dbReference type="PROSITE" id="PS51722">
    <property type="entry name" value="G_TR_2"/>
    <property type="match status" value="1"/>
</dbReference>
<gene>
    <name evidence="2" type="primary">tuf1</name>
    <name type="ordered locus">BCAN_A1258</name>
</gene>
<gene>
    <name evidence="2" type="primary">tuf2</name>
    <name type="ordered locus">BCAN_A1274</name>
</gene>
<proteinExistence type="inferred from homology"/>
<sequence>MAKSKFERTKPHVNIGTIGHVDHGKTSLTAAITKFFGEFKAYDQIDAAPEERARGITISTAHVEYETANRHYAHVDCPGHADYVKNMITGAAQMDGAILVVSAADGPMPQTREHILLARQVGVPAIVVFLNKCDQVDDAELLELVELEVRELLSKYEFPGDEIPIIKGSALAALEDSSKELGEDAIRNLMDAVDSYIPTPERPIDQPFLMPIEDVFSISGRGTVVTGRVERGIVKVGEEVEIVGIKATTKTTVTGVEMFRKLLDQGQAGDNIGALIRGVGREDVERGQVLCKPGSVKPHTKFKAEAYILTKDEGGRHTPFFTNYRPQFYFRTTDVTGVVTLPAGTEMVMPGDNVAMDVTLIVPIAMEEKLRFAIREGGRTVGAGIVSSIIE</sequence>
<comment type="function">
    <text evidence="2">GTP hydrolase that promotes the GTP-dependent binding of aminoacyl-tRNA to the A-site of ribosomes during protein biosynthesis.</text>
</comment>
<comment type="catalytic activity">
    <reaction evidence="2">
        <text>GTP + H2O = GDP + phosphate + H(+)</text>
        <dbReference type="Rhea" id="RHEA:19669"/>
        <dbReference type="ChEBI" id="CHEBI:15377"/>
        <dbReference type="ChEBI" id="CHEBI:15378"/>
        <dbReference type="ChEBI" id="CHEBI:37565"/>
        <dbReference type="ChEBI" id="CHEBI:43474"/>
        <dbReference type="ChEBI" id="CHEBI:58189"/>
        <dbReference type="EC" id="3.6.5.3"/>
    </reaction>
    <physiologicalReaction direction="left-to-right" evidence="2">
        <dbReference type="Rhea" id="RHEA:19670"/>
    </physiologicalReaction>
</comment>
<comment type="subunit">
    <text evidence="2">Monomer.</text>
</comment>
<comment type="subcellular location">
    <subcellularLocation>
        <location evidence="2">Cytoplasm</location>
    </subcellularLocation>
</comment>
<comment type="similarity">
    <text evidence="2">Belongs to the TRAFAC class translation factor GTPase superfamily. Classic translation factor GTPase family. EF-Tu/EF-1A subfamily.</text>
</comment>
<name>EFTU_BRUC2</name>
<accession>A9M5Q2</accession>
<feature type="chain" id="PRO_0000337331" description="Elongation factor Tu">
    <location>
        <begin position="1"/>
        <end position="391"/>
    </location>
</feature>
<feature type="domain" description="tr-type G">
    <location>
        <begin position="10"/>
        <end position="201"/>
    </location>
</feature>
<feature type="region of interest" description="G1" evidence="1">
    <location>
        <begin position="19"/>
        <end position="26"/>
    </location>
</feature>
<feature type="region of interest" description="G2" evidence="1">
    <location>
        <begin position="55"/>
        <end position="59"/>
    </location>
</feature>
<feature type="region of interest" description="G3" evidence="1">
    <location>
        <begin position="76"/>
        <end position="79"/>
    </location>
</feature>
<feature type="region of interest" description="G4" evidence="1">
    <location>
        <begin position="131"/>
        <end position="134"/>
    </location>
</feature>
<feature type="region of interest" description="G5" evidence="1">
    <location>
        <begin position="169"/>
        <end position="171"/>
    </location>
</feature>
<feature type="binding site" evidence="2">
    <location>
        <begin position="19"/>
        <end position="26"/>
    </location>
    <ligand>
        <name>GTP</name>
        <dbReference type="ChEBI" id="CHEBI:37565"/>
    </ligand>
</feature>
<feature type="binding site" evidence="2">
    <location>
        <position position="26"/>
    </location>
    <ligand>
        <name>Mg(2+)</name>
        <dbReference type="ChEBI" id="CHEBI:18420"/>
    </ligand>
</feature>
<feature type="binding site" evidence="2">
    <location>
        <begin position="76"/>
        <end position="80"/>
    </location>
    <ligand>
        <name>GTP</name>
        <dbReference type="ChEBI" id="CHEBI:37565"/>
    </ligand>
</feature>
<feature type="binding site" evidence="2">
    <location>
        <begin position="131"/>
        <end position="134"/>
    </location>
    <ligand>
        <name>GTP</name>
        <dbReference type="ChEBI" id="CHEBI:37565"/>
    </ligand>
</feature>
<organism>
    <name type="scientific">Brucella canis (strain ATCC 23365 / NCTC 10854 / RM-666)</name>
    <dbReference type="NCBI Taxonomy" id="483179"/>
    <lineage>
        <taxon>Bacteria</taxon>
        <taxon>Pseudomonadati</taxon>
        <taxon>Pseudomonadota</taxon>
        <taxon>Alphaproteobacteria</taxon>
        <taxon>Hyphomicrobiales</taxon>
        <taxon>Brucellaceae</taxon>
        <taxon>Brucella/Ochrobactrum group</taxon>
        <taxon>Brucella</taxon>
    </lineage>
</organism>